<comment type="function">
    <text evidence="3 4">Essential cofactor of the RNA polymerase L that plays a central role in the transcription and replication by forming the polymerase complex with RNA polymerase L and recruiting L to the genomic N-RNA template for RNA synthesis (By similarity). Also plays a central role in the encapsidation of nascent RNA chains by forming the encapsidation complex with the nucleocapsid protein N (N-P complex). Acts as a chaperone for newly synthesized free N protein, so-called N0, allowing encapsidation of nascent RNA chains during replication (By similarity). The nucleoprotein protein N prevents excessive phosphorylation of P, which leads to down-regulation of viral transcription/ replication. Participates, together with N, in the formation of viral factories (viroplasms), which are large inclusions in the host cytoplasm where replication takes place (By similarity).</text>
</comment>
<comment type="subunit">
    <text evidence="1 4 5">Homotetramer (By similarity). Interacts (via multimerization domain) with polymerase L; this interaction forms the polymerase L-P complex (By similarity). Interacts (via N-terminus) with N0 (via Ncore); this interaction allows P to chaperon N0 to avoid N polymerization before encapsidation (By similarity). Interacts (via C-terminus) with N-RNA template; this interaction positions the polymerase on the template for both transcription and replication (By similarity). Interacts with host RPS6KB1 kinase; this interaction may play a role in the viral replication and transcription (By similarity).</text>
</comment>
<comment type="domain">
    <text evidence="1 6">The N-terminus consists of a long intrinsically disordered tail. The central part contains the coiled-coil multimerization domain (MD or OD) (By similarity). Forms a four-stranded coiled coil structure (By similarity). The C-terminus constitutes the alpha-helical X domain (XD) that binds to the nucleocapsid (N-RNA complex) and the L polymerase (By similarity).</text>
</comment>
<comment type="RNA editing">
    <location>
        <position position="155" evidence="9"/>
    </location>
    <text>Partially edited. RNA editing at this position consists of an insertion of 2 or 4 guanine nucleotides. The sequence displayed here is the P protein, derived from the edited RNA (+ 2 nucleotides). The unedited RNA gives rise to the V protein (AC P30928). The edited RNA (+ 4 nucleotide) gives rise to the I protein.</text>
</comment>
<comment type="similarity">
    <text evidence="10">Belongs to the rubulavirus/avulavirus P protein family.</text>
</comment>
<reference key="1">
    <citation type="journal article" date="1988" name="J. Gen. Virol.">
        <title>Molecular cloning and sequence analysis of the mumps virus gene encoding the P protein: mumps virus P gene is monocistronic.</title>
        <authorList>
            <person name="Takeuchi K."/>
            <person name="Hishiyama M."/>
            <person name="Yamada A."/>
            <person name="Sugiura A."/>
        </authorList>
    </citation>
    <scope>NUCLEOTIDE SEQUENCE [GENOMIC RNA]</scope>
</reference>
<reference key="2">
    <citation type="journal article" date="1990" name="Virology">
        <title>Detection and characterization of mumps virus V protein.</title>
        <authorList>
            <person name="Takeuchi K."/>
            <person name="Tanabayashi K."/>
            <person name="Hishiyama M."/>
            <person name="Yamada Y.K."/>
            <person name="Yamada A."/>
            <person name="Sugiura A."/>
        </authorList>
    </citation>
    <scope>NUCLEOTIDE SEQUENCE [GENOMIC RNA]</scope>
    <scope>RNA EDITING</scope>
</reference>
<reference key="3">
    <citation type="journal article" date="1992" name="Virology">
        <title>Molecular cloning and sequence analysis of the mumps virus gene encoding the L protein and the trailer sequence.</title>
        <authorList>
            <person name="Okazaki K."/>
            <person name="Tanabayashi K."/>
            <person name="Takeuchi K."/>
            <person name="Hishiyama M."/>
            <person name="Okazaki K."/>
            <person name="Yamada A."/>
        </authorList>
    </citation>
    <scope>NUCLEOTIDE SEQUENCE [GENOMIC RNA]</scope>
</reference>
<evidence type="ECO:0000250" key="1">
    <source>
        <dbReference type="UniProtKB" id="C0JJ97"/>
    </source>
</evidence>
<evidence type="ECO:0000250" key="2">
    <source>
        <dbReference type="UniProtKB" id="F8V2V0"/>
    </source>
</evidence>
<evidence type="ECO:0000250" key="3">
    <source>
        <dbReference type="UniProtKB" id="P06162"/>
    </source>
</evidence>
<evidence type="ECO:0000250" key="4">
    <source>
        <dbReference type="UniProtKB" id="P16072"/>
    </source>
</evidence>
<evidence type="ECO:0000250" key="5">
    <source>
        <dbReference type="UniProtKB" id="Q77M42"/>
    </source>
</evidence>
<evidence type="ECO:0000250" key="6">
    <source>
        <dbReference type="UniProtKB" id="Q9WMB4"/>
    </source>
</evidence>
<evidence type="ECO:0000255" key="7"/>
<evidence type="ECO:0000256" key="8">
    <source>
        <dbReference type="SAM" id="MobiDB-lite"/>
    </source>
</evidence>
<evidence type="ECO:0000269" key="9">
    <source>
    </source>
</evidence>
<evidence type="ECO:0000305" key="10"/>
<protein>
    <recommendedName>
        <fullName>Phosphoprotein</fullName>
        <shortName>Protein P</shortName>
    </recommendedName>
</protein>
<proteinExistence type="inferred from homology"/>
<organism>
    <name type="scientific">Mumps virus genotype B (strain Miyahara vaccine)</name>
    <name type="common">MuV</name>
    <dbReference type="NCBI Taxonomy" id="11171"/>
    <lineage>
        <taxon>Viruses</taxon>
        <taxon>Riboviria</taxon>
        <taxon>Orthornavirae</taxon>
        <taxon>Negarnaviricota</taxon>
        <taxon>Haploviricotina</taxon>
        <taxon>Monjiviricetes</taxon>
        <taxon>Mononegavirales</taxon>
        <taxon>Paramyxoviridae</taxon>
        <taxon>Rubulavirinae</taxon>
        <taxon>Orthorubulavirus</taxon>
        <taxon>Orthorubulavirus parotitidis</taxon>
        <taxon>Mumps orthorubulavirus</taxon>
    </lineage>
</organism>
<name>PHOSP_MUMPM</name>
<gene>
    <name evidence="10" type="primary">P/V/I</name>
</gene>
<dbReference type="EMBL" id="D00352">
    <property type="protein sequence ID" value="BAA00260.1"/>
    <property type="molecule type" value="Genomic_RNA"/>
</dbReference>
<dbReference type="EMBL" id="AB040874">
    <property type="protein sequence ID" value="BAA94385.1"/>
    <property type="molecule type" value="Genomic_RNA"/>
</dbReference>
<dbReference type="PIR" id="JU0066">
    <property type="entry name" value="RRNZYA"/>
</dbReference>
<dbReference type="SMR" id="P16595"/>
<dbReference type="KEGG" id="vg:1489768"/>
<dbReference type="Proteomes" id="UP000002331">
    <property type="component" value="Segment"/>
</dbReference>
<dbReference type="CDD" id="cd21031">
    <property type="entry name" value="MEV_P-protein-C_like"/>
    <property type="match status" value="1"/>
</dbReference>
<dbReference type="Gene3D" id="1.20.5.300">
    <property type="match status" value="1"/>
</dbReference>
<dbReference type="Gene3D" id="1.10.8.10">
    <property type="entry name" value="DNA helicase RuvA subunit, C-terminal domain"/>
    <property type="match status" value="1"/>
</dbReference>
<dbReference type="InterPro" id="IPR004897">
    <property type="entry name" value="P/V_Pprotein_paramyxoviral"/>
</dbReference>
<dbReference type="Pfam" id="PF03210">
    <property type="entry name" value="Paramyx_P_V_C"/>
    <property type="match status" value="1"/>
</dbReference>
<keyword id="KW-0175">Coiled coil</keyword>
<keyword id="KW-0597">Phosphoprotein</keyword>
<keyword id="KW-1185">Reference proteome</keyword>
<keyword id="KW-0691">RNA editing</keyword>
<keyword id="KW-0693">Viral RNA replication</keyword>
<accession>P16595</accession>
<accession>Q783W1</accession>
<feature type="chain" id="PRO_0000142694" description="Phosphoprotein">
    <location>
        <begin position="1"/>
        <end position="391"/>
    </location>
</feature>
<feature type="region of interest" description="Disordered" evidence="8">
    <location>
        <begin position="55"/>
        <end position="90"/>
    </location>
</feature>
<feature type="region of interest" description="Disordered" evidence="8">
    <location>
        <begin position="145"/>
        <end position="208"/>
    </location>
</feature>
<feature type="region of interest" description="Multimerization" evidence="5">
    <location>
        <begin position="216"/>
        <end position="279"/>
    </location>
</feature>
<feature type="region of interest" description="Interaction with the nucleoprotein" evidence="1">
    <location>
        <begin position="343"/>
        <end position="391"/>
    </location>
</feature>
<feature type="coiled-coil region" evidence="7">
    <location>
        <begin position="218"/>
        <end position="245"/>
    </location>
</feature>
<feature type="compositionally biased region" description="Polar residues" evidence="8">
    <location>
        <begin position="55"/>
        <end position="65"/>
    </location>
</feature>
<feature type="modified residue" description="Phosphothreonine" evidence="2">
    <location>
        <position position="10"/>
    </location>
</feature>
<feature type="modified residue" description="Phosphothreonine" evidence="2">
    <location>
        <position position="16"/>
    </location>
</feature>
<feature type="modified residue" description="Phosphothreonine" evidence="2">
    <location>
        <position position="39"/>
    </location>
</feature>
<feature type="modified residue" description="Phosphoserine" evidence="2">
    <location>
        <position position="69"/>
    </location>
</feature>
<feature type="modified residue" description="Phosphothreonine" evidence="2">
    <location>
        <position position="91"/>
    </location>
</feature>
<feature type="modified residue" description="Phosphothreonine" evidence="2">
    <location>
        <position position="150"/>
    </location>
</feature>
<feature type="modified residue" description="Phosphothreonine" evidence="2">
    <location>
        <position position="165"/>
    </location>
</feature>
<feature type="modified residue" description="Phosphoserine" evidence="2">
    <location>
        <position position="188"/>
    </location>
</feature>
<feature type="modified residue" description="Phosphothreonine" evidence="2">
    <location>
        <position position="250"/>
    </location>
</feature>
<feature type="modified residue" description="Phosphoserine" evidence="2">
    <location>
        <position position="257"/>
    </location>
</feature>
<feature type="modified residue" description="Phosphothreonine" evidence="2">
    <location>
        <position position="258"/>
    </location>
</feature>
<feature type="modified residue" description="Phosphothreonine" evidence="2">
    <location>
        <position position="282"/>
    </location>
</feature>
<feature type="modified residue" description="Phosphoserine" evidence="4">
    <location>
        <position position="292"/>
    </location>
</feature>
<feature type="modified residue" description="Phosphoserine" evidence="4">
    <location>
        <position position="294"/>
    </location>
</feature>
<feature type="modified residue" description="Phosphothreonine" evidence="4">
    <location>
        <position position="298"/>
    </location>
</feature>
<feature type="modified residue" description="Phosphoserine" evidence="4">
    <location>
        <position position="301"/>
    </location>
</feature>
<feature type="modified residue" description="Phosphoserine" evidence="2">
    <location>
        <position position="374"/>
    </location>
</feature>
<feature type="modified residue" description="Phosphothreonine" evidence="2">
    <location>
        <position position="375"/>
    </location>
</feature>
<organismHost>
    <name type="scientific">Homo sapiens</name>
    <name type="common">Human</name>
    <dbReference type="NCBI Taxonomy" id="9606"/>
</organismHost>
<sequence length="391" mass="41587">MDQFIKQDETGDLIETGMNVANHFLSAPIQGTNSLSKATIIPGVAPVLIGNPEQKNIQYPTTSHQGSKSKGRGSGARPIIVSSSEGGTGGTQVPEPLFAQTGQGGIVTTVYQDPTIQPTGSYRSVELAKIGKERMINRFVEKPRTSTPVTEFKRGGPGAAAQGQTIQEEGIDGNGASAGSKERSGSLSGATPYAHLSLPQQDSTPANVGIAPQSAISANEIMDLLRGMDARLQHLEQKVDKVLAQGSMVTQIKNELSTVKTTLATIEGMMATVKIMDPGNPTGVPVDELRRSFSDHVTIVSGPGDVSFSSGEEPTLYLDELARPVPKPRPAKQPKPQPVKDLAGRKVMITKMITDCVANPQMKQVFEQRLAKASTEDALNDIKRDIIRSAI</sequence>